<name>YB96A_YEAST</name>
<sequence>MSRVYIYPLTVFYFFAIEMSVFCYYNWFYRRNFPYLFRPIFPFLIVLIS</sequence>
<organism>
    <name type="scientific">Saccharomyces cerevisiae (strain ATCC 204508 / S288c)</name>
    <name type="common">Baker's yeast</name>
    <dbReference type="NCBI Taxonomy" id="559292"/>
    <lineage>
        <taxon>Eukaryota</taxon>
        <taxon>Fungi</taxon>
        <taxon>Dikarya</taxon>
        <taxon>Ascomycota</taxon>
        <taxon>Saccharomycotina</taxon>
        <taxon>Saccharomycetes</taxon>
        <taxon>Saccharomycetales</taxon>
        <taxon>Saccharomycetaceae</taxon>
        <taxon>Saccharomyces</taxon>
    </lineage>
</organism>
<feature type="chain" id="PRO_0000248438" description="Uncharacterized protein YBR196C-A">
    <location>
        <begin position="1"/>
        <end position="49"/>
    </location>
</feature>
<feature type="transmembrane region" description="Helical" evidence="1">
    <location>
        <begin position="6"/>
        <end position="28"/>
    </location>
</feature>
<comment type="subcellular location">
    <subcellularLocation>
        <location evidence="2">Membrane</location>
        <topology evidence="2">Single-pass membrane protein</topology>
    </subcellularLocation>
</comment>
<gene>
    <name type="ordered locus">YBR196C-A</name>
</gene>
<evidence type="ECO:0000255" key="1"/>
<evidence type="ECO:0000305" key="2"/>
<proteinExistence type="predicted"/>
<reference key="1">
    <citation type="journal article" date="1994" name="EMBO J.">
        <title>Complete DNA sequence of yeast chromosome II.</title>
        <authorList>
            <person name="Feldmann H."/>
            <person name="Aigle M."/>
            <person name="Aljinovic G."/>
            <person name="Andre B."/>
            <person name="Baclet M.C."/>
            <person name="Barthe C."/>
            <person name="Baur A."/>
            <person name="Becam A.-M."/>
            <person name="Biteau N."/>
            <person name="Boles E."/>
            <person name="Brandt T."/>
            <person name="Brendel M."/>
            <person name="Brueckner M."/>
            <person name="Bussereau F."/>
            <person name="Christiansen C."/>
            <person name="Contreras R."/>
            <person name="Crouzet M."/>
            <person name="Cziepluch C."/>
            <person name="Demolis N."/>
            <person name="Delaveau T."/>
            <person name="Doignon F."/>
            <person name="Domdey H."/>
            <person name="Duesterhus S."/>
            <person name="Dubois E."/>
            <person name="Dujon B."/>
            <person name="El Bakkoury M."/>
            <person name="Entian K.-D."/>
            <person name="Feuermann M."/>
            <person name="Fiers W."/>
            <person name="Fobo G.M."/>
            <person name="Fritz C."/>
            <person name="Gassenhuber J."/>
            <person name="Glansdorff N."/>
            <person name="Goffeau A."/>
            <person name="Grivell L.A."/>
            <person name="de Haan M."/>
            <person name="Hein C."/>
            <person name="Herbert C.J."/>
            <person name="Hollenberg C.P."/>
            <person name="Holmstroem K."/>
            <person name="Jacq C."/>
            <person name="Jacquet M."/>
            <person name="Jauniaux J.-C."/>
            <person name="Jonniaux J.-L."/>
            <person name="Kallesoee T."/>
            <person name="Kiesau P."/>
            <person name="Kirchrath L."/>
            <person name="Koetter P."/>
            <person name="Korol S."/>
            <person name="Liebl S."/>
            <person name="Logghe M."/>
            <person name="Lohan A.J.E."/>
            <person name="Louis E.J."/>
            <person name="Li Z.Y."/>
            <person name="Maat M.J."/>
            <person name="Mallet L."/>
            <person name="Mannhaupt G."/>
            <person name="Messenguy F."/>
            <person name="Miosga T."/>
            <person name="Molemans F."/>
            <person name="Mueller S."/>
            <person name="Nasr F."/>
            <person name="Obermaier B."/>
            <person name="Perea J."/>
            <person name="Pierard A."/>
            <person name="Piravandi E."/>
            <person name="Pohl F.M."/>
            <person name="Pohl T.M."/>
            <person name="Potier S."/>
            <person name="Proft M."/>
            <person name="Purnelle B."/>
            <person name="Ramezani Rad M."/>
            <person name="Rieger M."/>
            <person name="Rose M."/>
            <person name="Schaaff-Gerstenschlaeger I."/>
            <person name="Scherens B."/>
            <person name="Schwarzlose C."/>
            <person name="Skala J."/>
            <person name="Slonimski P.P."/>
            <person name="Smits P.H.M."/>
            <person name="Souciet J.-L."/>
            <person name="Steensma H.Y."/>
            <person name="Stucka R."/>
            <person name="Urrestarazu L.A."/>
            <person name="van der Aart Q.J.M."/>
            <person name="Van Dyck L."/>
            <person name="Vassarotti A."/>
            <person name="Vetter I."/>
            <person name="Vierendeels F."/>
            <person name="Vissers S."/>
            <person name="Wagner G."/>
            <person name="de Wergifosse P."/>
            <person name="Wolfe K.H."/>
            <person name="Zagulski M."/>
            <person name="Zimmermann F.K."/>
            <person name="Mewes H.-W."/>
            <person name="Kleine K."/>
        </authorList>
    </citation>
    <scope>NUCLEOTIDE SEQUENCE [LARGE SCALE GENOMIC DNA]</scope>
    <source>
        <strain>ATCC 204508 / S288c</strain>
    </source>
</reference>
<reference key="2">
    <citation type="journal article" date="2014" name="G3 (Bethesda)">
        <title>The reference genome sequence of Saccharomyces cerevisiae: Then and now.</title>
        <authorList>
            <person name="Engel S.R."/>
            <person name="Dietrich F.S."/>
            <person name="Fisk D.G."/>
            <person name="Binkley G."/>
            <person name="Balakrishnan R."/>
            <person name="Costanzo M.C."/>
            <person name="Dwight S.S."/>
            <person name="Hitz B.C."/>
            <person name="Karra K."/>
            <person name="Nash R.S."/>
            <person name="Weng S."/>
            <person name="Wong E.D."/>
            <person name="Lloyd P."/>
            <person name="Skrzypek M.S."/>
            <person name="Miyasato S.R."/>
            <person name="Simison M."/>
            <person name="Cherry J.M."/>
        </authorList>
    </citation>
    <scope>GENOME REANNOTATION</scope>
    <source>
        <strain>ATCC 204508 / S288c</strain>
    </source>
</reference>
<reference key="3">
    <citation type="journal article" date="2003" name="Genome Res.">
        <title>Systematic discovery of new genes in the Saccharomyces cerevisiae genome.</title>
        <authorList>
            <person name="Kessler M.M."/>
            <person name="Zeng Q."/>
            <person name="Hogan S."/>
            <person name="Cook R."/>
            <person name="Morales A.J."/>
            <person name="Cottarel G."/>
        </authorList>
    </citation>
    <scope>GENOME REANNOTATION</scope>
</reference>
<accession>Q3E820</accession>
<accession>D6VQJ1</accession>
<keyword id="KW-0472">Membrane</keyword>
<keyword id="KW-1185">Reference proteome</keyword>
<keyword id="KW-0812">Transmembrane</keyword>
<keyword id="KW-1133">Transmembrane helix</keyword>
<protein>
    <recommendedName>
        <fullName>Uncharacterized protein YBR196C-A</fullName>
    </recommendedName>
</protein>
<dbReference type="EMBL" id="Z36066">
    <property type="status" value="NOT_ANNOTATED_CDS"/>
    <property type="molecule type" value="Genomic_DNA"/>
</dbReference>
<dbReference type="EMBL" id="BK006936">
    <property type="protein sequence ID" value="DAA07311.1"/>
    <property type="molecule type" value="Genomic_DNA"/>
</dbReference>
<dbReference type="RefSeq" id="NP_878051.3">
    <property type="nucleotide sequence ID" value="NM_001184541.3"/>
</dbReference>
<dbReference type="BioGRID" id="36989">
    <property type="interactions" value="73"/>
</dbReference>
<dbReference type="FunCoup" id="Q3E820">
    <property type="interactions" value="12"/>
</dbReference>
<dbReference type="STRING" id="4932.YBR196C-A"/>
<dbReference type="PaxDb" id="4932-YBR196C-A"/>
<dbReference type="EnsemblFungi" id="YBR196C-A_mRNA">
    <property type="protein sequence ID" value="YBR196C-A"/>
    <property type="gene ID" value="YBR196C-A"/>
</dbReference>
<dbReference type="GeneID" id="1466447"/>
<dbReference type="KEGG" id="sce:YBR196C-A"/>
<dbReference type="AGR" id="SGD:S000028534"/>
<dbReference type="SGD" id="S000028534">
    <property type="gene designation" value="YBR196C-A"/>
</dbReference>
<dbReference type="VEuPathDB" id="FungiDB:YBR196C-A"/>
<dbReference type="HOGENOM" id="CLU_3144075_0_0_1"/>
<dbReference type="InParanoid" id="Q3E820"/>
<dbReference type="OrthoDB" id="10408492at2759"/>
<dbReference type="BioCyc" id="YEAST:G3O-29259-MONOMER"/>
<dbReference type="BioGRID-ORCS" id="1466447">
    <property type="hits" value="0 hits in 10 CRISPR screens"/>
</dbReference>
<dbReference type="PRO" id="PR:Q3E820"/>
<dbReference type="Proteomes" id="UP000002311">
    <property type="component" value="Chromosome II"/>
</dbReference>
<dbReference type="GO" id="GO:0005789">
    <property type="term" value="C:endoplasmic reticulum membrane"/>
    <property type="evidence" value="ECO:0000314"/>
    <property type="project" value="SGD"/>
</dbReference>